<organism>
    <name type="scientific">Lacticaseibacillus casei</name>
    <name type="common">Lactobacillus casei</name>
    <dbReference type="NCBI Taxonomy" id="1582"/>
    <lineage>
        <taxon>Bacteria</taxon>
        <taxon>Bacillati</taxon>
        <taxon>Bacillota</taxon>
        <taxon>Bacilli</taxon>
        <taxon>Lactobacillales</taxon>
        <taxon>Lactobacillaceae</taxon>
        <taxon>Lacticaseibacillus</taxon>
    </lineage>
</organism>
<dbReference type="EMBL" id="D00496">
    <property type="protein sequence ID" value="BAA00388.1"/>
    <property type="molecule type" value="Genomic_DNA"/>
</dbReference>
<dbReference type="PIR" id="S42348">
    <property type="entry name" value="JS0345"/>
</dbReference>
<dbReference type="SMR" id="P29284"/>
<dbReference type="STRING" id="1582.AAW28_07610"/>
<dbReference type="eggNOG" id="COG0664">
    <property type="taxonomic scope" value="Bacteria"/>
</dbReference>
<dbReference type="GO" id="GO:0005829">
    <property type="term" value="C:cytosol"/>
    <property type="evidence" value="ECO:0007669"/>
    <property type="project" value="TreeGrafter"/>
</dbReference>
<dbReference type="GO" id="GO:0003677">
    <property type="term" value="F:DNA binding"/>
    <property type="evidence" value="ECO:0007669"/>
    <property type="project" value="UniProtKB-KW"/>
</dbReference>
<dbReference type="GO" id="GO:0003700">
    <property type="term" value="F:DNA-binding transcription factor activity"/>
    <property type="evidence" value="ECO:0007669"/>
    <property type="project" value="InterPro"/>
</dbReference>
<dbReference type="CDD" id="cd00038">
    <property type="entry name" value="CAP_ED"/>
    <property type="match status" value="1"/>
</dbReference>
<dbReference type="CDD" id="cd00092">
    <property type="entry name" value="HTH_CRP"/>
    <property type="match status" value="1"/>
</dbReference>
<dbReference type="Gene3D" id="2.60.120.10">
    <property type="entry name" value="Jelly Rolls"/>
    <property type="match status" value="1"/>
</dbReference>
<dbReference type="Gene3D" id="1.10.10.10">
    <property type="entry name" value="Winged helix-like DNA-binding domain superfamily/Winged helix DNA-binding domain"/>
    <property type="match status" value="1"/>
</dbReference>
<dbReference type="InterPro" id="IPR000595">
    <property type="entry name" value="cNMP-bd_dom"/>
</dbReference>
<dbReference type="InterPro" id="IPR018490">
    <property type="entry name" value="cNMP-bd_dom_sf"/>
</dbReference>
<dbReference type="InterPro" id="IPR050397">
    <property type="entry name" value="Env_Response_Regulators"/>
</dbReference>
<dbReference type="InterPro" id="IPR012318">
    <property type="entry name" value="HTH_CRP"/>
</dbReference>
<dbReference type="InterPro" id="IPR014710">
    <property type="entry name" value="RmlC-like_jellyroll"/>
</dbReference>
<dbReference type="InterPro" id="IPR018335">
    <property type="entry name" value="Tscrpt_reg_HTH_Crp-type_CS"/>
</dbReference>
<dbReference type="InterPro" id="IPR036388">
    <property type="entry name" value="WH-like_DNA-bd_sf"/>
</dbReference>
<dbReference type="InterPro" id="IPR036390">
    <property type="entry name" value="WH_DNA-bd_sf"/>
</dbReference>
<dbReference type="PANTHER" id="PTHR24567">
    <property type="entry name" value="CRP FAMILY TRANSCRIPTIONAL REGULATORY PROTEIN"/>
    <property type="match status" value="1"/>
</dbReference>
<dbReference type="PANTHER" id="PTHR24567:SF74">
    <property type="entry name" value="HTH-TYPE TRANSCRIPTIONAL REGULATOR ARCR"/>
    <property type="match status" value="1"/>
</dbReference>
<dbReference type="Pfam" id="PF00027">
    <property type="entry name" value="cNMP_binding"/>
    <property type="match status" value="1"/>
</dbReference>
<dbReference type="Pfam" id="PF13545">
    <property type="entry name" value="HTH_Crp_2"/>
    <property type="match status" value="1"/>
</dbReference>
<dbReference type="PRINTS" id="PR00034">
    <property type="entry name" value="HTHCRP"/>
</dbReference>
<dbReference type="SMART" id="SM00100">
    <property type="entry name" value="cNMP"/>
    <property type="match status" value="1"/>
</dbReference>
<dbReference type="SMART" id="SM00419">
    <property type="entry name" value="HTH_CRP"/>
    <property type="match status" value="1"/>
</dbReference>
<dbReference type="SUPFAM" id="SSF51206">
    <property type="entry name" value="cAMP-binding domain-like"/>
    <property type="match status" value="1"/>
</dbReference>
<dbReference type="SUPFAM" id="SSF46785">
    <property type="entry name" value="Winged helix' DNA-binding domain"/>
    <property type="match status" value="1"/>
</dbReference>
<dbReference type="PROSITE" id="PS50042">
    <property type="entry name" value="CNMP_BINDING_3"/>
    <property type="match status" value="1"/>
</dbReference>
<dbReference type="PROSITE" id="PS00042">
    <property type="entry name" value="HTH_CRP_1"/>
    <property type="match status" value="1"/>
</dbReference>
<dbReference type="PROSITE" id="PS51063">
    <property type="entry name" value="HTH_CRP_2"/>
    <property type="match status" value="1"/>
</dbReference>
<sequence>MAHSCTAVVPLFKNLNDEARAAIDALTHERQVEKGTVLISPDTAAHLLVVAHGKLKTYQLATNGKEQLLRVDGVGDYEGEAGLLNIANPNVYTETLTAATVCTISATDFQQLLLKQPQISLQLLTENARKMQALEKQAGYLGNDSINVRLTHYLLDLRTAAGQDTVTVPMAWTQLADYLGTTPETVSRTLKRLAEEKLIERSGKQVRILNAEDMEDFAW</sequence>
<proteinExistence type="predicted"/>
<accession>P29284</accession>
<gene>
    <name type="primary">flp</name>
</gene>
<feature type="chain" id="PRO_0000100160" description="Probable transcriptional regulator flp">
    <location>
        <begin position="1"/>
        <end position="219"/>
    </location>
</feature>
<feature type="domain" description="HTH crp-type" evidence="1">
    <location>
        <begin position="144"/>
        <end position="212"/>
    </location>
</feature>
<feature type="DNA-binding region" description="H-T-H motif" evidence="1">
    <location>
        <begin position="191"/>
        <end position="210"/>
    </location>
</feature>
<keyword id="KW-0238">DNA-binding</keyword>
<keyword id="KW-0804">Transcription</keyword>
<keyword id="KW-0805">Transcription regulation</keyword>
<protein>
    <recommendedName>
        <fullName>Probable transcriptional regulator flp</fullName>
    </recommendedName>
</protein>
<reference key="1">
    <citation type="journal article" date="1990" name="J. Biochem.">
        <title>Nucleotide sequences and genomic constitution of five tryptophan genes of Lactobacillus casei.</title>
        <authorList>
            <person name="Natori Y."/>
            <person name="Kano Y."/>
            <person name="Imamoto F."/>
        </authorList>
    </citation>
    <scope>NUCLEOTIDE SEQUENCE [GENOMIC DNA]</scope>
    <source>
        <strain>RNL7</strain>
    </source>
</reference>
<reference key="2">
    <citation type="journal article" date="1993" name="Nucleic Acids Res.">
        <title>Lactobacillus casei contains a member of the CRP-FNR family.</title>
        <authorList>
            <person name="Irvine A.S."/>
            <person name="Guest J.R."/>
        </authorList>
    </citation>
    <scope>SIMILARITY TO CRP/FNR FAMILY</scope>
</reference>
<name>FLP_LACCA</name>
<evidence type="ECO:0000255" key="1">
    <source>
        <dbReference type="PROSITE-ProRule" id="PRU00387"/>
    </source>
</evidence>